<organism>
    <name type="scientific">Streptomyces griseus</name>
    <dbReference type="NCBI Taxonomy" id="1911"/>
    <lineage>
        <taxon>Bacteria</taxon>
        <taxon>Bacillati</taxon>
        <taxon>Actinomycetota</taxon>
        <taxon>Actinomycetes</taxon>
        <taxon>Kitasatosporales</taxon>
        <taxon>Streptomycetaceae</taxon>
        <taxon>Streptomyces</taxon>
    </lineage>
</organism>
<proteinExistence type="inferred from homology"/>
<feature type="chain" id="PRO_0000078551" description="Chaperone protein DnaK">
    <location>
        <begin position="1"/>
        <end position="618"/>
    </location>
</feature>
<feature type="region of interest" description="Disordered" evidence="2">
    <location>
        <begin position="489"/>
        <end position="512"/>
    </location>
</feature>
<feature type="region of interest" description="Disordered" evidence="2">
    <location>
        <begin position="577"/>
        <end position="618"/>
    </location>
</feature>
<feature type="compositionally biased region" description="Basic and acidic residues" evidence="2">
    <location>
        <begin position="489"/>
        <end position="505"/>
    </location>
</feature>
<feature type="compositionally biased region" description="Low complexity" evidence="2">
    <location>
        <begin position="577"/>
        <end position="594"/>
    </location>
</feature>
<feature type="compositionally biased region" description="Acidic residues" evidence="2">
    <location>
        <begin position="600"/>
        <end position="610"/>
    </location>
</feature>
<feature type="modified residue" description="Phosphothreonine; by autocatalysis" evidence="1">
    <location>
        <position position="173"/>
    </location>
</feature>
<reference key="1">
    <citation type="journal article" date="1994" name="J. Ferment. Bioeng.">
        <title>Cloning and nucleotide sequence of a hsp70 gene from Streptomyces griseus.</title>
        <authorList>
            <person name="Hatada Y."/>
        </authorList>
    </citation>
    <scope>NUCLEOTIDE SEQUENCE [GENOMIC DNA]</scope>
    <source>
        <strain>HUT 6037 NO.2247</strain>
    </source>
</reference>
<evidence type="ECO:0000250" key="1"/>
<evidence type="ECO:0000256" key="2">
    <source>
        <dbReference type="SAM" id="MobiDB-lite"/>
    </source>
</evidence>
<evidence type="ECO:0000305" key="3"/>
<accession>Q54215</accession>
<keyword id="KW-0067">ATP-binding</keyword>
<keyword id="KW-0143">Chaperone</keyword>
<keyword id="KW-0547">Nucleotide-binding</keyword>
<keyword id="KW-0597">Phosphoprotein</keyword>
<keyword id="KW-0346">Stress response</keyword>
<gene>
    <name type="primary">dnaK</name>
</gene>
<name>DNAK_STRGR</name>
<comment type="function">
    <text evidence="1">Acts as a chaperone.</text>
</comment>
<comment type="induction">
    <text evidence="1">By stress conditions e.g. heat shock (By similarity).</text>
</comment>
<comment type="similarity">
    <text evidence="3">Belongs to the heat shock protein 70 family.</text>
</comment>
<sequence length="618" mass="66619">MARAVGIDLGTTNSVVSVLEGGEPTVITNAEGARTTPSVVAFAKNGEVLVGEVAKRQAVTNVDRTIRSVKRHMGTDWKIDLDGKSFNPQQMSAFILQKLKRDAESYLGEKVTDAVITVPAYFNDSERQATKEAGEIAGLNVLRIVNEPTAAALAYGLDKDDQTILVFDLGGGTFDVSLLEIGDGVVEVKATNGDNHLGGDDWDQRVVDYLVKQFANGHGVDLSKDKMALQRLREAAEKAKIELSSSTETTINLPYITASAEGPLHLDEKLTRSQFQQLTADLLDRCKTPFHNVIKDAGIQLSEIDHVVLVGGSTRMPAVAELVKELTGGQEANKGVNPDEVVAIGASLQAGVLKGEVKDVLLLDVTPLSLGIETKGGIMTKLIERNTTIPTKRSEIFTTAEDNQPSVQIQVYQGEREIAAYNKKLGMFELTGLPPAPRGVPQIEVAFDIDANGIMHVAAKDLGTGKEQKMTVTGGSSLPKDEVNRMREEAEKYAEEDHARREAAESRNQGEQLVYQTEKFLKDNEDKVPADVKTEVETAVGELKEKLKGEDSAEIRTATEKVRGRLPRIWARRCTANAQAEGAAPGADAPGDAQAKADDDVVDAEIVDDEKDTKGGAA</sequence>
<dbReference type="EMBL" id="D14499">
    <property type="protein sequence ID" value="BAA03389.1"/>
    <property type="molecule type" value="Genomic_DNA"/>
</dbReference>
<dbReference type="SMR" id="Q54215"/>
<dbReference type="STRING" id="1911.GCA_001715295_03077"/>
<dbReference type="GO" id="GO:0005524">
    <property type="term" value="F:ATP binding"/>
    <property type="evidence" value="ECO:0007669"/>
    <property type="project" value="UniProtKB-UniRule"/>
</dbReference>
<dbReference type="GO" id="GO:0140662">
    <property type="term" value="F:ATP-dependent protein folding chaperone"/>
    <property type="evidence" value="ECO:0007669"/>
    <property type="project" value="InterPro"/>
</dbReference>
<dbReference type="GO" id="GO:0051082">
    <property type="term" value="F:unfolded protein binding"/>
    <property type="evidence" value="ECO:0007669"/>
    <property type="project" value="InterPro"/>
</dbReference>
<dbReference type="CDD" id="cd10234">
    <property type="entry name" value="ASKHA_NBD_HSP70_DnaK-like"/>
    <property type="match status" value="1"/>
</dbReference>
<dbReference type="FunFam" id="2.60.34.10:FF:000014">
    <property type="entry name" value="Chaperone protein DnaK HSP70"/>
    <property type="match status" value="1"/>
</dbReference>
<dbReference type="FunFam" id="1.20.1270.10:FF:000001">
    <property type="entry name" value="Molecular chaperone DnaK"/>
    <property type="match status" value="1"/>
</dbReference>
<dbReference type="FunFam" id="3.30.420.40:FF:000071">
    <property type="entry name" value="Molecular chaperone DnaK"/>
    <property type="match status" value="1"/>
</dbReference>
<dbReference type="FunFam" id="3.90.640.10:FF:000003">
    <property type="entry name" value="Molecular chaperone DnaK"/>
    <property type="match status" value="1"/>
</dbReference>
<dbReference type="Gene3D" id="1.20.1270.10">
    <property type="match status" value="1"/>
</dbReference>
<dbReference type="Gene3D" id="3.30.420.40">
    <property type="match status" value="2"/>
</dbReference>
<dbReference type="Gene3D" id="3.90.640.10">
    <property type="entry name" value="Actin, Chain A, domain 4"/>
    <property type="match status" value="1"/>
</dbReference>
<dbReference type="Gene3D" id="2.60.34.10">
    <property type="entry name" value="Substrate Binding Domain Of DNAk, Chain A, domain 1"/>
    <property type="match status" value="1"/>
</dbReference>
<dbReference type="HAMAP" id="MF_00332">
    <property type="entry name" value="DnaK"/>
    <property type="match status" value="1"/>
</dbReference>
<dbReference type="InterPro" id="IPR043129">
    <property type="entry name" value="ATPase_NBD"/>
</dbReference>
<dbReference type="InterPro" id="IPR012725">
    <property type="entry name" value="Chaperone_DnaK"/>
</dbReference>
<dbReference type="InterPro" id="IPR018181">
    <property type="entry name" value="Heat_shock_70_CS"/>
</dbReference>
<dbReference type="InterPro" id="IPR029048">
    <property type="entry name" value="HSP70_C_sf"/>
</dbReference>
<dbReference type="InterPro" id="IPR029047">
    <property type="entry name" value="HSP70_peptide-bd_sf"/>
</dbReference>
<dbReference type="InterPro" id="IPR013126">
    <property type="entry name" value="Hsp_70_fam"/>
</dbReference>
<dbReference type="NCBIfam" id="NF001413">
    <property type="entry name" value="PRK00290.1"/>
    <property type="match status" value="1"/>
</dbReference>
<dbReference type="NCBIfam" id="TIGR02350">
    <property type="entry name" value="prok_dnaK"/>
    <property type="match status" value="1"/>
</dbReference>
<dbReference type="PANTHER" id="PTHR19375">
    <property type="entry name" value="HEAT SHOCK PROTEIN 70KDA"/>
    <property type="match status" value="1"/>
</dbReference>
<dbReference type="Pfam" id="PF00012">
    <property type="entry name" value="HSP70"/>
    <property type="match status" value="1"/>
</dbReference>
<dbReference type="PRINTS" id="PR00301">
    <property type="entry name" value="HEATSHOCK70"/>
</dbReference>
<dbReference type="SUPFAM" id="SSF53067">
    <property type="entry name" value="Actin-like ATPase domain"/>
    <property type="match status" value="2"/>
</dbReference>
<dbReference type="SUPFAM" id="SSF100934">
    <property type="entry name" value="Heat shock protein 70kD (HSP70), C-terminal subdomain"/>
    <property type="match status" value="1"/>
</dbReference>
<dbReference type="SUPFAM" id="SSF100920">
    <property type="entry name" value="Heat shock protein 70kD (HSP70), peptide-binding domain"/>
    <property type="match status" value="1"/>
</dbReference>
<dbReference type="PROSITE" id="PS00297">
    <property type="entry name" value="HSP70_1"/>
    <property type="match status" value="1"/>
</dbReference>
<dbReference type="PROSITE" id="PS00329">
    <property type="entry name" value="HSP70_2"/>
    <property type="match status" value="1"/>
</dbReference>
<dbReference type="PROSITE" id="PS01036">
    <property type="entry name" value="HSP70_3"/>
    <property type="match status" value="1"/>
</dbReference>
<protein>
    <recommendedName>
        <fullName>Chaperone protein DnaK</fullName>
    </recommendedName>
    <alternativeName>
        <fullName>HSP70</fullName>
    </alternativeName>
    <alternativeName>
        <fullName>Heat shock 70 kDa protein</fullName>
    </alternativeName>
    <alternativeName>
        <fullName>Heat shock protein 70</fullName>
    </alternativeName>
</protein>